<protein>
    <recommendedName>
        <fullName>Calmodulin</fullName>
        <shortName>CaM</shortName>
    </recommendedName>
</protein>
<organism>
    <name type="scientific">Schizosaccharomyces pombe (strain 972 / ATCC 24843)</name>
    <name type="common">Fission yeast</name>
    <dbReference type="NCBI Taxonomy" id="284812"/>
    <lineage>
        <taxon>Eukaryota</taxon>
        <taxon>Fungi</taxon>
        <taxon>Dikarya</taxon>
        <taxon>Ascomycota</taxon>
        <taxon>Taphrinomycotina</taxon>
        <taxon>Schizosaccharomycetes</taxon>
        <taxon>Schizosaccharomycetales</taxon>
        <taxon>Schizosaccharomycetaceae</taxon>
        <taxon>Schizosaccharomyces</taxon>
    </lineage>
</organism>
<name>CALM_SCHPO</name>
<feature type="chain" id="PRO_0000198327" description="Calmodulin">
    <location>
        <begin position="1"/>
        <end position="150"/>
    </location>
</feature>
<feature type="domain" description="EF-hand 1" evidence="1">
    <location>
        <begin position="9"/>
        <end position="44"/>
    </location>
</feature>
<feature type="domain" description="EF-hand 2" evidence="1">
    <location>
        <begin position="45"/>
        <end position="80"/>
    </location>
</feature>
<feature type="domain" description="EF-hand 3" evidence="1">
    <location>
        <begin position="82"/>
        <end position="117"/>
    </location>
</feature>
<feature type="domain" description="EF-hand 4" evidence="1">
    <location>
        <begin position="118"/>
        <end position="150"/>
    </location>
</feature>
<feature type="binding site" evidence="1">
    <location>
        <position position="22"/>
    </location>
    <ligand>
        <name>Ca(2+)</name>
        <dbReference type="ChEBI" id="CHEBI:29108"/>
        <label>1</label>
    </ligand>
</feature>
<feature type="binding site" evidence="1">
    <location>
        <position position="24"/>
    </location>
    <ligand>
        <name>Ca(2+)</name>
        <dbReference type="ChEBI" id="CHEBI:29108"/>
        <label>1</label>
    </ligand>
</feature>
<feature type="binding site" evidence="1">
    <location>
        <position position="26"/>
    </location>
    <ligand>
        <name>Ca(2+)</name>
        <dbReference type="ChEBI" id="CHEBI:29108"/>
        <label>1</label>
    </ligand>
</feature>
<feature type="binding site" evidence="1">
    <location>
        <position position="28"/>
    </location>
    <ligand>
        <name>Ca(2+)</name>
        <dbReference type="ChEBI" id="CHEBI:29108"/>
        <label>1</label>
    </ligand>
</feature>
<feature type="binding site" evidence="1">
    <location>
        <position position="33"/>
    </location>
    <ligand>
        <name>Ca(2+)</name>
        <dbReference type="ChEBI" id="CHEBI:29108"/>
        <label>1</label>
    </ligand>
</feature>
<feature type="binding site" evidence="1">
    <location>
        <position position="58"/>
    </location>
    <ligand>
        <name>Ca(2+)</name>
        <dbReference type="ChEBI" id="CHEBI:29108"/>
        <label>2</label>
    </ligand>
</feature>
<feature type="binding site" evidence="1">
    <location>
        <position position="60"/>
    </location>
    <ligand>
        <name>Ca(2+)</name>
        <dbReference type="ChEBI" id="CHEBI:29108"/>
        <label>2</label>
    </ligand>
</feature>
<feature type="binding site" evidence="1">
    <location>
        <position position="62"/>
    </location>
    <ligand>
        <name>Ca(2+)</name>
        <dbReference type="ChEBI" id="CHEBI:29108"/>
        <label>2</label>
    </ligand>
</feature>
<feature type="binding site" evidence="1">
    <location>
        <position position="64"/>
    </location>
    <ligand>
        <name>Ca(2+)</name>
        <dbReference type="ChEBI" id="CHEBI:29108"/>
        <label>2</label>
    </ligand>
</feature>
<feature type="binding site" evidence="1">
    <location>
        <position position="69"/>
    </location>
    <ligand>
        <name>Ca(2+)</name>
        <dbReference type="ChEBI" id="CHEBI:29108"/>
        <label>2</label>
    </ligand>
</feature>
<feature type="binding site" evidence="1">
    <location>
        <position position="95"/>
    </location>
    <ligand>
        <name>Ca(2+)</name>
        <dbReference type="ChEBI" id="CHEBI:29108"/>
        <label>3</label>
    </ligand>
</feature>
<feature type="binding site" evidence="1">
    <location>
        <position position="97"/>
    </location>
    <ligand>
        <name>Ca(2+)</name>
        <dbReference type="ChEBI" id="CHEBI:29108"/>
        <label>3</label>
    </ligand>
</feature>
<feature type="binding site" evidence="1">
    <location>
        <position position="99"/>
    </location>
    <ligand>
        <name>Ca(2+)</name>
        <dbReference type="ChEBI" id="CHEBI:29108"/>
        <label>3</label>
    </ligand>
</feature>
<feature type="binding site" evidence="1">
    <location>
        <position position="101"/>
    </location>
    <ligand>
        <name>Ca(2+)</name>
        <dbReference type="ChEBI" id="CHEBI:29108"/>
        <label>3</label>
    </ligand>
</feature>
<feature type="binding site" evidence="1">
    <location>
        <position position="106"/>
    </location>
    <ligand>
        <name>Ca(2+)</name>
        <dbReference type="ChEBI" id="CHEBI:29108"/>
        <label>3</label>
    </ligand>
</feature>
<feature type="binding site" evidence="1">
    <location>
        <position position="131"/>
    </location>
    <ligand>
        <name>Ca(2+)</name>
        <dbReference type="ChEBI" id="CHEBI:29108"/>
        <label>4</label>
    </ligand>
</feature>
<feature type="binding site" evidence="1">
    <location>
        <position position="133"/>
    </location>
    <ligand>
        <name>Ca(2+)</name>
        <dbReference type="ChEBI" id="CHEBI:29108"/>
        <label>4</label>
    </ligand>
</feature>
<feature type="binding site" evidence="1">
    <location>
        <position position="135"/>
    </location>
    <ligand>
        <name>Ca(2+)</name>
        <dbReference type="ChEBI" id="CHEBI:29108"/>
        <label>4</label>
    </ligand>
</feature>
<feature type="binding site" evidence="1">
    <location>
        <position position="142"/>
    </location>
    <ligand>
        <name>Ca(2+)</name>
        <dbReference type="ChEBI" id="CHEBI:29108"/>
        <label>4</label>
    </ligand>
</feature>
<reference key="1">
    <citation type="journal article" date="1987" name="Proc. Natl. Acad. Sci. U.S.A.">
        <title>Analysis and in vivo disruption of the gene coding for calmodulin in Schizosaccharomyces pombe.</title>
        <authorList>
            <person name="Takeda T."/>
            <person name="Yamamoto M."/>
        </authorList>
    </citation>
    <scope>NUCLEOTIDE SEQUENCE [GENOMIC DNA]</scope>
</reference>
<reference key="2">
    <citation type="journal article" date="2002" name="Nature">
        <title>The genome sequence of Schizosaccharomyces pombe.</title>
        <authorList>
            <person name="Wood V."/>
            <person name="Gwilliam R."/>
            <person name="Rajandream M.A."/>
            <person name="Lyne M.H."/>
            <person name="Lyne R."/>
            <person name="Stewart A."/>
            <person name="Sgouros J.G."/>
            <person name="Peat N."/>
            <person name="Hayles J."/>
            <person name="Baker S.G."/>
            <person name="Basham D."/>
            <person name="Bowman S."/>
            <person name="Brooks K."/>
            <person name="Brown D."/>
            <person name="Brown S."/>
            <person name="Chillingworth T."/>
            <person name="Churcher C.M."/>
            <person name="Collins M."/>
            <person name="Connor R."/>
            <person name="Cronin A."/>
            <person name="Davis P."/>
            <person name="Feltwell T."/>
            <person name="Fraser A."/>
            <person name="Gentles S."/>
            <person name="Goble A."/>
            <person name="Hamlin N."/>
            <person name="Harris D.E."/>
            <person name="Hidalgo J."/>
            <person name="Hodgson G."/>
            <person name="Holroyd S."/>
            <person name="Hornsby T."/>
            <person name="Howarth S."/>
            <person name="Huckle E.J."/>
            <person name="Hunt S."/>
            <person name="Jagels K."/>
            <person name="James K.D."/>
            <person name="Jones L."/>
            <person name="Jones M."/>
            <person name="Leather S."/>
            <person name="McDonald S."/>
            <person name="McLean J."/>
            <person name="Mooney P."/>
            <person name="Moule S."/>
            <person name="Mungall K.L."/>
            <person name="Murphy L.D."/>
            <person name="Niblett D."/>
            <person name="Odell C."/>
            <person name="Oliver K."/>
            <person name="O'Neil S."/>
            <person name="Pearson D."/>
            <person name="Quail M.A."/>
            <person name="Rabbinowitsch E."/>
            <person name="Rutherford K.M."/>
            <person name="Rutter S."/>
            <person name="Saunders D."/>
            <person name="Seeger K."/>
            <person name="Sharp S."/>
            <person name="Skelton J."/>
            <person name="Simmonds M.N."/>
            <person name="Squares R."/>
            <person name="Squares S."/>
            <person name="Stevens K."/>
            <person name="Taylor K."/>
            <person name="Taylor R.G."/>
            <person name="Tivey A."/>
            <person name="Walsh S.V."/>
            <person name="Warren T."/>
            <person name="Whitehead S."/>
            <person name="Woodward J.R."/>
            <person name="Volckaert G."/>
            <person name="Aert R."/>
            <person name="Robben J."/>
            <person name="Grymonprez B."/>
            <person name="Weltjens I."/>
            <person name="Vanstreels E."/>
            <person name="Rieger M."/>
            <person name="Schaefer M."/>
            <person name="Mueller-Auer S."/>
            <person name="Gabel C."/>
            <person name="Fuchs M."/>
            <person name="Duesterhoeft A."/>
            <person name="Fritzc C."/>
            <person name="Holzer E."/>
            <person name="Moestl D."/>
            <person name="Hilbert H."/>
            <person name="Borzym K."/>
            <person name="Langer I."/>
            <person name="Beck A."/>
            <person name="Lehrach H."/>
            <person name="Reinhardt R."/>
            <person name="Pohl T.M."/>
            <person name="Eger P."/>
            <person name="Zimmermann W."/>
            <person name="Wedler H."/>
            <person name="Wambutt R."/>
            <person name="Purnelle B."/>
            <person name="Goffeau A."/>
            <person name="Cadieu E."/>
            <person name="Dreano S."/>
            <person name="Gloux S."/>
            <person name="Lelaure V."/>
            <person name="Mottier S."/>
            <person name="Galibert F."/>
            <person name="Aves S.J."/>
            <person name="Xiang Z."/>
            <person name="Hunt C."/>
            <person name="Moore K."/>
            <person name="Hurst S.M."/>
            <person name="Lucas M."/>
            <person name="Rochet M."/>
            <person name="Gaillardin C."/>
            <person name="Tallada V.A."/>
            <person name="Garzon A."/>
            <person name="Thode G."/>
            <person name="Daga R.R."/>
            <person name="Cruzado L."/>
            <person name="Jimenez J."/>
            <person name="Sanchez M."/>
            <person name="del Rey F."/>
            <person name="Benito J."/>
            <person name="Dominguez A."/>
            <person name="Revuelta J.L."/>
            <person name="Moreno S."/>
            <person name="Armstrong J."/>
            <person name="Forsburg S.L."/>
            <person name="Cerutti L."/>
            <person name="Lowe T."/>
            <person name="McCombie W.R."/>
            <person name="Paulsen I."/>
            <person name="Potashkin J."/>
            <person name="Shpakovski G.V."/>
            <person name="Ussery D."/>
            <person name="Barrell B.G."/>
            <person name="Nurse P."/>
        </authorList>
    </citation>
    <scope>NUCLEOTIDE SEQUENCE [LARGE SCALE GENOMIC DNA]</scope>
    <source>
        <strain>972 / ATCC 24843</strain>
    </source>
</reference>
<reference key="3">
    <citation type="journal article" date="1998" name="Curr. Biol.">
        <title>Rng2p, a protein required for cytokinesis in fission yeast, is a component of the actomyosin ring and the spindle pole body.</title>
        <authorList>
            <person name="Eng K."/>
            <person name="Naqvi N.I."/>
            <person name="Wong K.C.Y."/>
            <person name="Balasubramanian M.K."/>
        </authorList>
    </citation>
    <scope>INTERACTION WITH RNG2</scope>
    <scope>SUBCELLULAR LOCATION</scope>
</reference>
<dbReference type="EMBL" id="M16475">
    <property type="protein sequence ID" value="AAA35291.1"/>
    <property type="molecule type" value="Genomic_DNA"/>
</dbReference>
<dbReference type="EMBL" id="CU329670">
    <property type="protein sequence ID" value="CAB08742.1"/>
    <property type="molecule type" value="Genomic_DNA"/>
</dbReference>
<dbReference type="PIR" id="A26614">
    <property type="entry name" value="MCZP"/>
</dbReference>
<dbReference type="RefSeq" id="NP_593340.1">
    <property type="nucleotide sequence ID" value="NM_001018772.2"/>
</dbReference>
<dbReference type="SMR" id="P05933"/>
<dbReference type="BioGRID" id="279474">
    <property type="interactions" value="12"/>
</dbReference>
<dbReference type="FunCoup" id="P05933">
    <property type="interactions" value="155"/>
</dbReference>
<dbReference type="IntAct" id="P05933">
    <property type="interactions" value="1"/>
</dbReference>
<dbReference type="STRING" id="284812.P05933"/>
<dbReference type="iPTMnet" id="P05933"/>
<dbReference type="PaxDb" id="4896-SPAC3A12.14.1"/>
<dbReference type="EnsemblFungi" id="SPAC3A12.14.1">
    <property type="protein sequence ID" value="SPAC3A12.14.1:pep"/>
    <property type="gene ID" value="SPAC3A12.14"/>
</dbReference>
<dbReference type="GeneID" id="2543039"/>
<dbReference type="KEGG" id="spo:2543039"/>
<dbReference type="PomBase" id="SPAC3A12.14">
    <property type="gene designation" value="cam1"/>
</dbReference>
<dbReference type="VEuPathDB" id="FungiDB:SPAC3A12.14"/>
<dbReference type="eggNOG" id="KOG0027">
    <property type="taxonomic scope" value="Eukaryota"/>
</dbReference>
<dbReference type="HOGENOM" id="CLU_061288_2_0_1"/>
<dbReference type="InParanoid" id="P05933"/>
<dbReference type="OMA" id="ARKMKEC"/>
<dbReference type="PhylomeDB" id="P05933"/>
<dbReference type="PRO" id="PR:P05933"/>
<dbReference type="Proteomes" id="UP000002485">
    <property type="component" value="Chromosome I"/>
</dbReference>
<dbReference type="GO" id="GO:0051285">
    <property type="term" value="C:cell cortex of cell tip"/>
    <property type="evidence" value="ECO:0000269"/>
    <property type="project" value="PomBase"/>
</dbReference>
<dbReference type="GO" id="GO:0032153">
    <property type="term" value="C:cell division site"/>
    <property type="evidence" value="ECO:0000314"/>
    <property type="project" value="PomBase"/>
</dbReference>
<dbReference type="GO" id="GO:0051286">
    <property type="term" value="C:cell tip"/>
    <property type="evidence" value="ECO:0000318"/>
    <property type="project" value="GO_Central"/>
</dbReference>
<dbReference type="GO" id="GO:0061493">
    <property type="term" value="C:central plaque of mitotic spindle pole body"/>
    <property type="evidence" value="ECO:0000314"/>
    <property type="project" value="PomBase"/>
</dbReference>
<dbReference type="GO" id="GO:0005823">
    <property type="term" value="C:central plaque of spindle pole body"/>
    <property type="evidence" value="ECO:0000318"/>
    <property type="project" value="GO_Central"/>
</dbReference>
<dbReference type="GO" id="GO:0005737">
    <property type="term" value="C:cytoplasm"/>
    <property type="evidence" value="ECO:0000318"/>
    <property type="project" value="GO_Central"/>
</dbReference>
<dbReference type="GO" id="GO:0005829">
    <property type="term" value="C:cytosol"/>
    <property type="evidence" value="ECO:0007005"/>
    <property type="project" value="PomBase"/>
</dbReference>
<dbReference type="GO" id="GO:0000935">
    <property type="term" value="C:division septum"/>
    <property type="evidence" value="ECO:0000314"/>
    <property type="project" value="PomBase"/>
</dbReference>
<dbReference type="GO" id="GO:0035838">
    <property type="term" value="C:growing cell tip"/>
    <property type="evidence" value="ECO:0000314"/>
    <property type="project" value="PomBase"/>
</dbReference>
<dbReference type="GO" id="GO:0043332">
    <property type="term" value="C:mating projection tip"/>
    <property type="evidence" value="ECO:0000314"/>
    <property type="project" value="PomBase"/>
</dbReference>
<dbReference type="GO" id="GO:0035974">
    <property type="term" value="C:meiotic spindle pole body"/>
    <property type="evidence" value="ECO:0000314"/>
    <property type="project" value="PomBase"/>
</dbReference>
<dbReference type="GO" id="GO:0044732">
    <property type="term" value="C:mitotic spindle pole body"/>
    <property type="evidence" value="ECO:0000314"/>
    <property type="project" value="PomBase"/>
</dbReference>
<dbReference type="GO" id="GO:0045160">
    <property type="term" value="C:myosin I complex"/>
    <property type="evidence" value="ECO:0000353"/>
    <property type="project" value="PomBase"/>
</dbReference>
<dbReference type="GO" id="GO:0035841">
    <property type="term" value="C:new growing cell tip"/>
    <property type="evidence" value="ECO:0000314"/>
    <property type="project" value="PomBase"/>
</dbReference>
<dbReference type="GO" id="GO:0035840">
    <property type="term" value="C:old growing cell tip"/>
    <property type="evidence" value="ECO:0000314"/>
    <property type="project" value="PomBase"/>
</dbReference>
<dbReference type="GO" id="GO:0005509">
    <property type="term" value="F:calcium ion binding"/>
    <property type="evidence" value="ECO:0000314"/>
    <property type="project" value="PomBase"/>
</dbReference>
<dbReference type="GO" id="GO:0030234">
    <property type="term" value="F:enzyme regulator activity"/>
    <property type="evidence" value="ECO:0000318"/>
    <property type="project" value="GO_Central"/>
</dbReference>
<dbReference type="GO" id="GO:0030437">
    <property type="term" value="P:ascospore formation"/>
    <property type="evidence" value="ECO:0000315"/>
    <property type="project" value="PomBase"/>
</dbReference>
<dbReference type="GO" id="GO:0031322">
    <property type="term" value="P:ascospore-type prospore-specific spindle pole body remodeling"/>
    <property type="evidence" value="ECO:0000315"/>
    <property type="project" value="PomBase"/>
</dbReference>
<dbReference type="GO" id="GO:0000226">
    <property type="term" value="P:microtubule cytoskeleton organization"/>
    <property type="evidence" value="ECO:0000318"/>
    <property type="project" value="GO_Central"/>
</dbReference>
<dbReference type="GO" id="GO:0090307">
    <property type="term" value="P:mitotic spindle assembly"/>
    <property type="evidence" value="ECO:0000315"/>
    <property type="project" value="PomBase"/>
</dbReference>
<dbReference type="GO" id="GO:1902441">
    <property type="term" value="P:protein localization to meiotic spindle pole body"/>
    <property type="evidence" value="ECO:0000315"/>
    <property type="project" value="PomBase"/>
</dbReference>
<dbReference type="GO" id="GO:0051300">
    <property type="term" value="P:spindle pole body organization"/>
    <property type="evidence" value="ECO:0000318"/>
    <property type="project" value="GO_Central"/>
</dbReference>
<dbReference type="CDD" id="cd00051">
    <property type="entry name" value="EFh"/>
    <property type="match status" value="2"/>
</dbReference>
<dbReference type="FunFam" id="1.10.238.10:FF:000527">
    <property type="entry name" value="Calmodulin-3"/>
    <property type="match status" value="1"/>
</dbReference>
<dbReference type="Gene3D" id="1.10.238.10">
    <property type="entry name" value="EF-hand"/>
    <property type="match status" value="3"/>
</dbReference>
<dbReference type="InterPro" id="IPR050230">
    <property type="entry name" value="CALM/Myosin/TropC-like"/>
</dbReference>
<dbReference type="InterPro" id="IPR011992">
    <property type="entry name" value="EF-hand-dom_pair"/>
</dbReference>
<dbReference type="InterPro" id="IPR018247">
    <property type="entry name" value="EF_Hand_1_Ca_BS"/>
</dbReference>
<dbReference type="InterPro" id="IPR002048">
    <property type="entry name" value="EF_hand_dom"/>
</dbReference>
<dbReference type="PANTHER" id="PTHR23048:SF0">
    <property type="entry name" value="CALMODULIN LIKE 3"/>
    <property type="match status" value="1"/>
</dbReference>
<dbReference type="PANTHER" id="PTHR23048">
    <property type="entry name" value="MYOSIN LIGHT CHAIN 1, 3"/>
    <property type="match status" value="1"/>
</dbReference>
<dbReference type="Pfam" id="PF13499">
    <property type="entry name" value="EF-hand_7"/>
    <property type="match status" value="2"/>
</dbReference>
<dbReference type="SMART" id="SM00054">
    <property type="entry name" value="EFh"/>
    <property type="match status" value="4"/>
</dbReference>
<dbReference type="SUPFAM" id="SSF47473">
    <property type="entry name" value="EF-hand"/>
    <property type="match status" value="1"/>
</dbReference>
<dbReference type="PROSITE" id="PS00018">
    <property type="entry name" value="EF_HAND_1"/>
    <property type="match status" value="4"/>
</dbReference>
<dbReference type="PROSITE" id="PS50222">
    <property type="entry name" value="EF_HAND_2"/>
    <property type="match status" value="4"/>
</dbReference>
<accession>P05933</accession>
<gene>
    <name type="primary">cam1</name>
    <name type="ORF">SPAC3A12.14</name>
</gene>
<proteinExistence type="evidence at protein level"/>
<evidence type="ECO:0000255" key="1">
    <source>
        <dbReference type="PROSITE-ProRule" id="PRU00448"/>
    </source>
</evidence>
<evidence type="ECO:0000269" key="2">
    <source>
    </source>
</evidence>
<evidence type="ECO:0000305" key="3"/>
<comment type="function">
    <text>Calmodulin mediates the control of a large number of enzymes, ion channels and other proteins by Ca(2+). Among the enzymes to be stimulated by the calmodulin-Ca(2+) complex are a number of protein kinases and phosphatases.</text>
</comment>
<comment type="subunit">
    <text evidence="2">Interacts with rng2.</text>
</comment>
<comment type="interaction">
    <interactant intactId="EBI-1152513">
        <id>P05933</id>
    </interactant>
    <interactant intactId="EBI-1152490">
        <id>O14188</id>
        <label>rng2</label>
    </interactant>
    <organismsDiffer>false</organismsDiffer>
    <experiments>2</experiments>
</comment>
<comment type="subcellular location">
    <subcellularLocation>
        <location evidence="2">Cytoplasm</location>
        <location evidence="2">Cytoskeleton</location>
        <location evidence="2">Microtubule organizing center</location>
        <location evidence="2">Spindle pole body</location>
    </subcellularLocation>
    <text>In the growing tips and spindle pole body during interphase and in the septum during septation. Component of a ring structure that forms prior to septation.</text>
</comment>
<comment type="miscellaneous">
    <text>This protein has four functional calcium-binding sites.</text>
</comment>
<comment type="similarity">
    <text evidence="3">Belongs to the calmodulin family.</text>
</comment>
<keyword id="KW-0106">Calcium</keyword>
<keyword id="KW-0963">Cytoplasm</keyword>
<keyword id="KW-0206">Cytoskeleton</keyword>
<keyword id="KW-0479">Metal-binding</keyword>
<keyword id="KW-1185">Reference proteome</keyword>
<keyword id="KW-0677">Repeat</keyword>
<sequence>MTTRNLTDEQIAEFREAFSLFDRDQDGNITSNELGVVMRSLGQSPTAAELQDMINEVDADGNGTIDFTEFLTMMARKMKDTDNEEEVREAFKVFDKDGNGYITVEELTHVLTSLGERLSQEEVADMIREADTDGDGVINYEEFSRVISSK</sequence>